<evidence type="ECO:0000255" key="1">
    <source>
        <dbReference type="PROSITE-ProRule" id="PRU00125"/>
    </source>
</evidence>
<evidence type="ECO:0000255" key="2">
    <source>
        <dbReference type="PROSITE-ProRule" id="PRU00192"/>
    </source>
</evidence>
<evidence type="ECO:0000256" key="3">
    <source>
        <dbReference type="SAM" id="MobiDB-lite"/>
    </source>
</evidence>
<organism>
    <name type="scientific">Caenorhabditis elegans</name>
    <dbReference type="NCBI Taxonomy" id="6239"/>
    <lineage>
        <taxon>Eukaryota</taxon>
        <taxon>Metazoa</taxon>
        <taxon>Ecdysozoa</taxon>
        <taxon>Nematoda</taxon>
        <taxon>Chromadorea</taxon>
        <taxon>Rhabditida</taxon>
        <taxon>Rhabditina</taxon>
        <taxon>Rhabditomorpha</taxon>
        <taxon>Rhabditoidea</taxon>
        <taxon>Rhabditidae</taxon>
        <taxon>Peloderinae</taxon>
        <taxon>Caenorhabditis</taxon>
    </lineage>
</organism>
<reference key="1">
    <citation type="journal article" date="1994" name="Nature">
        <title>2.2 Mb of contiguous nucleotide sequence from chromosome III of C. elegans.</title>
        <authorList>
            <person name="Wilson R."/>
            <person name="Ainscough R."/>
            <person name="Anderson K."/>
            <person name="Baynes C."/>
            <person name="Berks M."/>
            <person name="Bonfield J."/>
            <person name="Burton J."/>
            <person name="Connell M."/>
            <person name="Copsey T."/>
            <person name="Cooper J."/>
            <person name="Coulson A."/>
            <person name="Craxton M."/>
            <person name="Dear S."/>
            <person name="Du Z."/>
            <person name="Durbin R."/>
            <person name="Favello A."/>
            <person name="Fraser A."/>
            <person name="Fulton L."/>
            <person name="Gardner A."/>
            <person name="Green P."/>
            <person name="Hawkins T."/>
            <person name="Hillier L."/>
            <person name="Jier M."/>
            <person name="Johnston L."/>
            <person name="Jones M."/>
            <person name="Kershaw J."/>
            <person name="Kirsten J."/>
            <person name="Laisster N."/>
            <person name="Latreille P."/>
            <person name="Lightning J."/>
            <person name="Lloyd C."/>
            <person name="Mortimore B."/>
            <person name="O'Callaghan M."/>
            <person name="Parsons J."/>
            <person name="Percy C."/>
            <person name="Rifken L."/>
            <person name="Roopra A."/>
            <person name="Saunders D."/>
            <person name="Shownkeen R."/>
            <person name="Sims M."/>
            <person name="Smaldon N."/>
            <person name="Smith A."/>
            <person name="Smith M."/>
            <person name="Sonnhammer E."/>
            <person name="Staden R."/>
            <person name="Sulston J."/>
            <person name="Thierry-Mieg J."/>
            <person name="Thomas K."/>
            <person name="Vaudin M."/>
            <person name="Vaughan K."/>
            <person name="Waterston R."/>
            <person name="Watson A."/>
            <person name="Weinstock L."/>
            <person name="Wilkinson-Sproat J."/>
            <person name="Wohldman P."/>
        </authorList>
    </citation>
    <scope>NUCLEOTIDE SEQUENCE [LARGE SCALE GENOMIC DNA]</scope>
    <source>
        <strain>Bristol N2</strain>
    </source>
</reference>
<reference key="2">
    <citation type="journal article" date="1998" name="Science">
        <title>Genome sequence of the nematode C. elegans: a platform for investigating biology.</title>
        <authorList>
            <consortium name="The C. elegans sequencing consortium"/>
        </authorList>
    </citation>
    <scope>NUCLEOTIDE SEQUENCE [LARGE SCALE GENOMIC DNA]</scope>
    <source>
        <strain>Bristol N2</strain>
    </source>
</reference>
<proteinExistence type="predicted"/>
<protein>
    <recommendedName>
        <fullName>LIM and SH3 domain protein F42H10.3</fullName>
    </recommendedName>
</protein>
<dbReference type="EMBL" id="FO080327">
    <property type="protein sequence ID" value="CCD62883.1"/>
    <property type="molecule type" value="Genomic_DNA"/>
</dbReference>
<dbReference type="PIR" id="S44650">
    <property type="entry name" value="S44650"/>
</dbReference>
<dbReference type="PIR" id="S44651">
    <property type="entry name" value="S44651"/>
</dbReference>
<dbReference type="RefSeq" id="NP_498874.2">
    <property type="nucleotide sequence ID" value="NM_066473.5"/>
</dbReference>
<dbReference type="SMR" id="P34416"/>
<dbReference type="BioGRID" id="50445">
    <property type="interactions" value="13"/>
</dbReference>
<dbReference type="FunCoup" id="P34416">
    <property type="interactions" value="797"/>
</dbReference>
<dbReference type="IntAct" id="P34416">
    <property type="interactions" value="12"/>
</dbReference>
<dbReference type="MINT" id="P34416"/>
<dbReference type="STRING" id="6239.F42H10.3a.1"/>
<dbReference type="PaxDb" id="6239-F42H10.3a"/>
<dbReference type="PeptideAtlas" id="P34416"/>
<dbReference type="EnsemblMetazoa" id="F42H10.3a.1">
    <property type="protein sequence ID" value="F42H10.3a.1"/>
    <property type="gene ID" value="WBGene00018367"/>
</dbReference>
<dbReference type="GeneID" id="185685"/>
<dbReference type="KEGG" id="cel:CELE_F42H10.3"/>
<dbReference type="UCSC" id="F42H10.3">
    <property type="organism name" value="c. elegans"/>
</dbReference>
<dbReference type="AGR" id="WB:WBGene00018367"/>
<dbReference type="CTD" id="185685"/>
<dbReference type="WormBase" id="F42H10.3a">
    <property type="protein sequence ID" value="CE37108"/>
    <property type="gene ID" value="WBGene00018367"/>
</dbReference>
<dbReference type="eggNOG" id="KOG1702">
    <property type="taxonomic scope" value="Eukaryota"/>
</dbReference>
<dbReference type="GeneTree" id="ENSGT00940000154775"/>
<dbReference type="InParanoid" id="P34416"/>
<dbReference type="OMA" id="TPVYHHQ"/>
<dbReference type="OrthoDB" id="191061at2759"/>
<dbReference type="PhylomeDB" id="P34416"/>
<dbReference type="PRO" id="PR:P34416"/>
<dbReference type="Proteomes" id="UP000001940">
    <property type="component" value="Chromosome III"/>
</dbReference>
<dbReference type="Bgee" id="WBGene00018367">
    <property type="expression patterns" value="Expressed in pharyngeal muscle cell (C elegans) and 4 other cell types or tissues"/>
</dbReference>
<dbReference type="ExpressionAtlas" id="P34416">
    <property type="expression patterns" value="baseline and differential"/>
</dbReference>
<dbReference type="GO" id="GO:0030054">
    <property type="term" value="C:cell junction"/>
    <property type="evidence" value="ECO:0007005"/>
    <property type="project" value="WormBase"/>
</dbReference>
<dbReference type="GO" id="GO:0005925">
    <property type="term" value="C:focal adhesion"/>
    <property type="evidence" value="ECO:0000318"/>
    <property type="project" value="GO_Central"/>
</dbReference>
<dbReference type="GO" id="GO:0055120">
    <property type="term" value="C:striated muscle dense body"/>
    <property type="evidence" value="ECO:0007005"/>
    <property type="project" value="WormBase"/>
</dbReference>
<dbReference type="GO" id="GO:0051015">
    <property type="term" value="F:actin filament binding"/>
    <property type="evidence" value="ECO:0000318"/>
    <property type="project" value="GO_Central"/>
</dbReference>
<dbReference type="GO" id="GO:0046872">
    <property type="term" value="F:metal ion binding"/>
    <property type="evidence" value="ECO:0007669"/>
    <property type="project" value="UniProtKB-KW"/>
</dbReference>
<dbReference type="CDD" id="cd09447">
    <property type="entry name" value="LIM_LASP"/>
    <property type="match status" value="1"/>
</dbReference>
<dbReference type="CDD" id="cd11789">
    <property type="entry name" value="SH3_Nebulin_family_C"/>
    <property type="match status" value="1"/>
</dbReference>
<dbReference type="FunFam" id="2.10.110.10:FF:000087">
    <property type="entry name" value="LIM zinc-binding domain-containing Nebulette"/>
    <property type="match status" value="1"/>
</dbReference>
<dbReference type="FunFam" id="2.30.30.40:FF:000007">
    <property type="entry name" value="nebulin isoform X1"/>
    <property type="match status" value="1"/>
</dbReference>
<dbReference type="Gene3D" id="2.10.110.10">
    <property type="entry name" value="Cysteine Rich Protein"/>
    <property type="match status" value="1"/>
</dbReference>
<dbReference type="Gene3D" id="2.30.30.40">
    <property type="entry name" value="SH3 Domains"/>
    <property type="match status" value="1"/>
</dbReference>
<dbReference type="InterPro" id="IPR051759">
    <property type="entry name" value="LIM-SH3_domain_protein"/>
</dbReference>
<dbReference type="InterPro" id="IPR000900">
    <property type="entry name" value="Nebulin_repeat"/>
</dbReference>
<dbReference type="InterPro" id="IPR036028">
    <property type="entry name" value="SH3-like_dom_sf"/>
</dbReference>
<dbReference type="InterPro" id="IPR001452">
    <property type="entry name" value="SH3_domain"/>
</dbReference>
<dbReference type="InterPro" id="IPR001781">
    <property type="entry name" value="Znf_LIM"/>
</dbReference>
<dbReference type="PANTHER" id="PTHR46218">
    <property type="entry name" value="LASP"/>
    <property type="match status" value="1"/>
</dbReference>
<dbReference type="PANTHER" id="PTHR46218:SF4">
    <property type="entry name" value="LIM AND SH3 DOMAIN PROTEIN LASP"/>
    <property type="match status" value="1"/>
</dbReference>
<dbReference type="Pfam" id="PF00412">
    <property type="entry name" value="LIM"/>
    <property type="match status" value="1"/>
</dbReference>
<dbReference type="Pfam" id="PF00880">
    <property type="entry name" value="Nebulin"/>
    <property type="match status" value="1"/>
</dbReference>
<dbReference type="Pfam" id="PF00018">
    <property type="entry name" value="SH3_1"/>
    <property type="match status" value="1"/>
</dbReference>
<dbReference type="PRINTS" id="PR00499">
    <property type="entry name" value="P67PHOX"/>
</dbReference>
<dbReference type="PRINTS" id="PR00452">
    <property type="entry name" value="SH3DOMAIN"/>
</dbReference>
<dbReference type="SMART" id="SM00132">
    <property type="entry name" value="LIM"/>
    <property type="match status" value="1"/>
</dbReference>
<dbReference type="SMART" id="SM00227">
    <property type="entry name" value="NEBU"/>
    <property type="match status" value="2"/>
</dbReference>
<dbReference type="SMART" id="SM00326">
    <property type="entry name" value="SH3"/>
    <property type="match status" value="1"/>
</dbReference>
<dbReference type="SUPFAM" id="SSF57716">
    <property type="entry name" value="Glucocorticoid receptor-like (DNA-binding domain)"/>
    <property type="match status" value="2"/>
</dbReference>
<dbReference type="SUPFAM" id="SSF50044">
    <property type="entry name" value="SH3-domain"/>
    <property type="match status" value="1"/>
</dbReference>
<dbReference type="PROSITE" id="PS50023">
    <property type="entry name" value="LIM_DOMAIN_2"/>
    <property type="match status" value="1"/>
</dbReference>
<dbReference type="PROSITE" id="PS51216">
    <property type="entry name" value="NEBULIN"/>
    <property type="match status" value="2"/>
</dbReference>
<dbReference type="PROSITE" id="PS50002">
    <property type="entry name" value="SH3"/>
    <property type="match status" value="1"/>
</dbReference>
<accession>P34416</accession>
<accession>P34417</accession>
<accession>P34421</accession>
<accession>Q6AHR7</accession>
<gene>
    <name type="ORF">F42H10.3</name>
</gene>
<name>LASP1_CAEEL</name>
<feature type="chain" id="PRO_0000075765" description="LIM and SH3 domain protein F42H10.3">
    <location>
        <begin position="1"/>
        <end position="335"/>
    </location>
</feature>
<feature type="domain" description="LIM zinc-binding" evidence="1">
    <location>
        <begin position="5"/>
        <end position="65"/>
    </location>
</feature>
<feature type="repeat" description="Nebulin 1">
    <location>
        <begin position="66"/>
        <end position="97"/>
    </location>
</feature>
<feature type="repeat" description="Nebulin 2">
    <location>
        <begin position="98"/>
        <end position="132"/>
    </location>
</feature>
<feature type="domain" description="SH3" evidence="2">
    <location>
        <begin position="266"/>
        <end position="327"/>
    </location>
</feature>
<feature type="region of interest" description="Disordered" evidence="3">
    <location>
        <begin position="128"/>
        <end position="151"/>
    </location>
</feature>
<feature type="region of interest" description="Disordered" evidence="3">
    <location>
        <begin position="233"/>
        <end position="264"/>
    </location>
</feature>
<feature type="compositionally biased region" description="Basic and acidic residues" evidence="3">
    <location>
        <begin position="128"/>
        <end position="142"/>
    </location>
</feature>
<feature type="compositionally biased region" description="Low complexity" evidence="3">
    <location>
        <begin position="242"/>
        <end position="260"/>
    </location>
</feature>
<sequence>MSKKCAREDCGKTVYPVEELKCLDKVWHKQCFKCTVCGMTLNMKNYKGYDKRPYCDPHYPKTVASVMADTPEMRRIAENTKNQSNIKYHAEYEKMKGTKIEIADDPEMERLKKNTQVQSNVSYHGVLDQKARQEEVRPKEEISPNPTPTPISPMNHQSYSAPTQAVAANTHLIYSTEQGGAVSPTPQKSIGSIADYDPMNGQWGTAAAQPRNSEKLGYLKAQVDKGPARFCADFAGAPPPSSNSISSTSPHSTLSSPQSTISPTGKAGFAVKAIYDYAAADKDEISFLEGDIIVNCEKIDDGWMTGTVQRTLQWGMLPANYVQPHKLPTGLHRLS</sequence>
<keyword id="KW-0440">LIM domain</keyword>
<keyword id="KW-0479">Metal-binding</keyword>
<keyword id="KW-1185">Reference proteome</keyword>
<keyword id="KW-0677">Repeat</keyword>
<keyword id="KW-0728">SH3 domain</keyword>
<keyword id="KW-0862">Zinc</keyword>